<protein>
    <recommendedName>
        <fullName>Transposon Ty3-I Gag-Pol polyprotein</fullName>
    </recommendedName>
    <alternativeName>
        <fullName>Gag3-Pol3</fullName>
    </alternativeName>
    <alternativeName>
        <fullName>Transposon Ty3-2 TYA-TYB polyprotein</fullName>
    </alternativeName>
    <component>
        <recommendedName>
            <fullName>Capsid protein</fullName>
            <shortName>CA</shortName>
        </recommendedName>
        <alternativeName>
            <fullName>p24</fullName>
        </alternativeName>
    </component>
    <component>
        <recommendedName>
            <fullName>Spacer peptide p3</fullName>
        </recommendedName>
    </component>
    <component>
        <recommendedName>
            <fullName>Nucleocapsid protein p11</fullName>
            <shortName>NC</shortName>
        </recommendedName>
    </component>
    <component>
        <recommendedName>
            <fullName>Ty3 protease</fullName>
            <shortName>PR</shortName>
            <ecNumber>3.4.23.-</ecNumber>
        </recommendedName>
        <alternativeName>
            <fullName>p16</fullName>
        </alternativeName>
    </component>
    <component>
        <recommendedName>
            <fullName>Spacer peptide J</fullName>
        </recommendedName>
    </component>
    <component>
        <recommendedName>
            <fullName>Reverse transcriptase/ribonuclease H</fullName>
            <shortName>RT</shortName>
            <shortName>RT-RH</shortName>
            <ecNumber>2.7.7.49</ecNumber>
            <ecNumber>2.7.7.7</ecNumber>
            <ecNumber>3.1.26.4</ecNumber>
        </recommendedName>
        <alternativeName>
            <fullName>p55</fullName>
        </alternativeName>
    </component>
    <component>
        <recommendedName>
            <fullName>Integrase p52</fullName>
            <shortName>IN</shortName>
        </recommendedName>
    </component>
    <component>
        <recommendedName>
            <fullName>Integrase p49</fullName>
            <shortName>IN</shortName>
        </recommendedName>
    </component>
</protein>
<organism>
    <name type="scientific">Saccharomyces cerevisiae (strain ATCC 204508 / S288c)</name>
    <name type="common">Baker's yeast</name>
    <dbReference type="NCBI Taxonomy" id="559292"/>
    <lineage>
        <taxon>Eukaryota</taxon>
        <taxon>Fungi</taxon>
        <taxon>Dikarya</taxon>
        <taxon>Ascomycota</taxon>
        <taxon>Saccharomycotina</taxon>
        <taxon>Saccharomycetes</taxon>
        <taxon>Saccharomycetales</taxon>
        <taxon>Saccharomycetaceae</taxon>
        <taxon>Saccharomyces</taxon>
    </lineage>
</organism>
<keyword id="KW-0002">3D-structure</keyword>
<keyword id="KW-0064">Aspartyl protease</keyword>
<keyword id="KW-0067">ATP-binding</keyword>
<keyword id="KW-0963">Cytoplasm</keyword>
<keyword id="KW-0229">DNA integration</keyword>
<keyword id="KW-0233">DNA recombination</keyword>
<keyword id="KW-0238">DNA-binding</keyword>
<keyword id="KW-0239">DNA-directed DNA polymerase</keyword>
<keyword id="KW-0255">Endonuclease</keyword>
<keyword id="KW-0378">Hydrolase</keyword>
<keyword id="KW-0460">Magnesium</keyword>
<keyword id="KW-0479">Metal-binding</keyword>
<keyword id="KW-0511">Multifunctional enzyme</keyword>
<keyword id="KW-0540">Nuclease</keyword>
<keyword id="KW-0547">Nucleotide-binding</keyword>
<keyword id="KW-0548">Nucleotidyltransferase</keyword>
<keyword id="KW-0539">Nucleus</keyword>
<keyword id="KW-0645">Protease</keyword>
<keyword id="KW-1185">Reference proteome</keyword>
<keyword id="KW-0688">Ribosomal frameshifting</keyword>
<keyword id="KW-0694">RNA-binding</keyword>
<keyword id="KW-0695">RNA-directed DNA polymerase</keyword>
<keyword id="KW-0808">Transferase</keyword>
<keyword id="KW-0814">Transposable element</keyword>
<keyword id="KW-1188">Viral release from host cell</keyword>
<keyword id="KW-0917">Virion maturation</keyword>
<keyword id="KW-0862">Zinc</keyword>
<keyword id="KW-0863">Zinc-finger</keyword>
<feature type="chain" id="PRO_0000279367" description="Transposon Ty3-I Gag-Pol polyprotein">
    <location>
        <begin position="1"/>
        <end position="1498"/>
    </location>
</feature>
<feature type="chain" id="PRO_0000279368" description="Capsid protein">
    <location>
        <begin position="1"/>
        <end position="207"/>
    </location>
</feature>
<feature type="peptide" id="PRO_0000279369" description="Spacer peptide p3">
    <location>
        <begin position="208"/>
        <end position="233"/>
    </location>
</feature>
<feature type="chain" id="PRO_0000279370" description="Nucleocapsid protein p11">
    <location>
        <begin position="234"/>
        <end position="309"/>
    </location>
</feature>
<feature type="chain" id="PRO_0000279371" description="Ty3 protease">
    <location>
        <begin position="310"/>
        <end position="442"/>
    </location>
</feature>
<feature type="peptide" id="PRO_0000279372" description="Spacer peptide J" evidence="2">
    <location>
        <begin position="443"/>
        <end position="561"/>
    </location>
</feature>
<feature type="chain" id="PRO_0000279373" description="Reverse transcriptase/ribonuclease H">
    <location>
        <begin position="562"/>
        <end position="1037"/>
    </location>
</feature>
<feature type="chain" id="PRO_0000279374" description="Integrase p52">
    <location>
        <begin position="1038"/>
        <end position="1498"/>
    </location>
</feature>
<feature type="chain" id="PRO_0000279375" description="Integrase p49">
    <location>
        <begin position="1064"/>
        <end position="1498"/>
    </location>
</feature>
<feature type="domain" description="Reverse transcriptase" evidence="4">
    <location>
        <begin position="646"/>
        <end position="823"/>
    </location>
</feature>
<feature type="domain" description="RNase H Ty3/gyspy-type">
    <location>
        <begin position="919"/>
        <end position="1037"/>
    </location>
</feature>
<feature type="domain" description="Integrase catalytic" evidence="5">
    <location>
        <begin position="1185"/>
        <end position="1350"/>
    </location>
</feature>
<feature type="zinc finger region" description="CCHC-type" evidence="3">
    <location>
        <begin position="265"/>
        <end position="282"/>
    </location>
</feature>
<feature type="region of interest" description="Disordered" evidence="6">
    <location>
        <begin position="470"/>
        <end position="490"/>
    </location>
</feature>
<feature type="region of interest" description="Integrase-type zinc finger-like">
    <location>
        <begin position="1132"/>
        <end position="1171"/>
    </location>
</feature>
<feature type="active site" description="For protease activity; shared with dimeric partner" evidence="1">
    <location>
        <position position="336"/>
    </location>
</feature>
<feature type="binding site" evidence="1">
    <location>
        <position position="712"/>
    </location>
    <ligand>
        <name>Mg(2+)</name>
        <dbReference type="ChEBI" id="CHEBI:18420"/>
        <label>1</label>
        <note>catalytic; for reverse transcriptase activity</note>
    </ligand>
</feature>
<feature type="binding site" evidence="1">
    <location>
        <position position="774"/>
    </location>
    <ligand>
        <name>Mg(2+)</name>
        <dbReference type="ChEBI" id="CHEBI:18420"/>
        <label>1</label>
        <note>catalytic; for reverse transcriptase activity</note>
    </ligand>
</feature>
<feature type="binding site" evidence="1">
    <location>
        <position position="775"/>
    </location>
    <ligand>
        <name>Mg(2+)</name>
        <dbReference type="ChEBI" id="CHEBI:18420"/>
        <label>1</label>
        <note>catalytic; for reverse transcriptase activity</note>
    </ligand>
</feature>
<feature type="binding site" evidence="1">
    <location>
        <position position="1201"/>
    </location>
    <ligand>
        <name>Mg(2+)</name>
        <dbReference type="ChEBI" id="CHEBI:18420"/>
        <label>2</label>
        <note>catalytic; for integrase activity</note>
    </ligand>
</feature>
<feature type="binding site" evidence="1">
    <location>
        <position position="1262"/>
    </location>
    <ligand>
        <name>Mg(2+)</name>
        <dbReference type="ChEBI" id="CHEBI:18420"/>
        <label>2</label>
        <note>catalytic; for integrase activity</note>
    </ligand>
</feature>
<feature type="site" description="Cleavage; by Ty3 protease">
    <location>
        <begin position="207"/>
        <end position="208"/>
    </location>
</feature>
<feature type="site" description="Cleavage; by Ty3 protease">
    <location>
        <begin position="233"/>
        <end position="234"/>
    </location>
</feature>
<feature type="site" description="Cleavage; by Ty3 protease">
    <location>
        <begin position="309"/>
        <end position="310"/>
    </location>
</feature>
<feature type="site" description="Cleavage; by Ty3 protease" evidence="2">
    <location>
        <begin position="442"/>
        <end position="443"/>
    </location>
</feature>
<feature type="site" description="Cleavage; by Ty3 protease">
    <location>
        <begin position="561"/>
        <end position="562"/>
    </location>
</feature>
<feature type="site" description="Cleavage; by Ty3 protease">
    <location>
        <begin position="1037"/>
        <end position="1038"/>
    </location>
</feature>
<feature type="site" description="Cleavage; by Ty3 protease; partial">
    <location>
        <begin position="1063"/>
        <end position="1064"/>
    </location>
</feature>
<feature type="sequence conflict" description="In Ref. 1; AAA35184." evidence="7" ref="1">
    <original>G</original>
    <variation>A</variation>
    <location>
        <position position="502"/>
    </location>
</feature>
<proteinExistence type="evidence at protein level"/>
<name>YI31B_YEAST</name>
<comment type="function">
    <text evidence="1">Capsid protein (CA) is the structural component of the virus-like particle (VLP), forming the shell that encapsulates the genomic RNA-nucleocapsid complex.</text>
</comment>
<comment type="function">
    <text evidence="1">Nucleocapsid protein p11 (NC) forms the nucleocore that coats the retro-elements dimeric RNA. Binds these RNAs through its zinc fingers (By similarity). Promotes primer tRNA(i)-Met annealing to the multipartite primer-binding site (PBS), dimerization of Ty3 RNA and initiation of reverse transcription (By similarity).</text>
</comment>
<comment type="function">
    <text evidence="1">The aspartyl protease (PR) mediates the proteolytic cleavages of the Gag and Gag-Pol polyproteins after assembly of the VLP.</text>
</comment>
<comment type="function">
    <text evidence="1">Reverse transcriptase/ribonuclease H (RT) is a multifunctional enzyme that catalyzes the conversion of the retro-elements RNA genome into dsDNA within the VLP. The enzyme displays a DNA polymerase activity that can copy either DNA or RNA templates, and a ribonuclease H (RNase H) activity that cleaves the RNA strand of RNA-DNA heteroduplexes during plus-strand synthesis and hydrolyzes RNA primers. The conversion leads to a linear dsDNA copy of the retrotransposon that includes long terminal repeats (LTRs) at both ends (By similarity).</text>
</comment>
<comment type="function">
    <text evidence="1">Integrase (IN) targets the VLP to the nucleus, where a subparticle preintegration complex (PIC) containing at least integrase and the newly synthesized dsDNA copy of the retrotransposon must transit the nuclear membrane. Once in the nucleus, integrase performs the integration of the dsDNA into the host genome (By similarity).</text>
</comment>
<comment type="catalytic activity">
    <reaction evidence="4">
        <text>DNA(n) + a 2'-deoxyribonucleoside 5'-triphosphate = DNA(n+1) + diphosphate</text>
        <dbReference type="Rhea" id="RHEA:22508"/>
        <dbReference type="Rhea" id="RHEA-COMP:17339"/>
        <dbReference type="Rhea" id="RHEA-COMP:17340"/>
        <dbReference type="ChEBI" id="CHEBI:33019"/>
        <dbReference type="ChEBI" id="CHEBI:61560"/>
        <dbReference type="ChEBI" id="CHEBI:173112"/>
        <dbReference type="EC" id="2.7.7.49"/>
    </reaction>
</comment>
<comment type="catalytic activity">
    <reaction evidence="4">
        <text>DNA(n) + a 2'-deoxyribonucleoside 5'-triphosphate = DNA(n+1) + diphosphate</text>
        <dbReference type="Rhea" id="RHEA:22508"/>
        <dbReference type="Rhea" id="RHEA-COMP:17339"/>
        <dbReference type="Rhea" id="RHEA-COMP:17340"/>
        <dbReference type="ChEBI" id="CHEBI:33019"/>
        <dbReference type="ChEBI" id="CHEBI:61560"/>
        <dbReference type="ChEBI" id="CHEBI:173112"/>
        <dbReference type="EC" id="2.7.7.7"/>
    </reaction>
</comment>
<comment type="catalytic activity">
    <reaction>
        <text>Endonucleolytic cleavage to 5'-phosphomonoester.</text>
        <dbReference type="EC" id="3.1.26.4"/>
    </reaction>
</comment>
<comment type="subunit">
    <text evidence="1">The protease is a homodimer, whose active site consists of two apposed aspartic acid residues.</text>
</comment>
<comment type="subcellular location">
    <subcellularLocation>
        <location>Cytoplasm</location>
    </subcellularLocation>
    <subcellularLocation>
        <location evidence="1">Nucleus</location>
    </subcellularLocation>
</comment>
<comment type="alternative products">
    <event type="ribosomal frameshifting"/>
    <isoform>
        <id>Q7LHG5-1</id>
        <name>Transposon Ty3-I Gag-Pol polyprotein</name>
        <sequence type="displayed"/>
    </isoform>
    <isoform>
        <id>Q99219-1</id>
        <name>Transposon Ty3-I Gag polyprotein</name>
        <sequence type="external"/>
    </isoform>
    <text>The Gag-Pol polyprotein is generated by a +1 ribosomal frameshift.</text>
</comment>
<comment type="domain">
    <text evidence="1">Integrase core domain contains the D-x(n)-D-x(35)-E motif, named for the phylogenetically conserved glutamic acid and aspartic acid residues and the invariant 35 amino acid spacing between the second and third acidic residues. Each acidic residue of the D,D(35)E motif is independently essential for the 3'-processing and strand transfer activities of purified integrase protein (By similarity).</text>
</comment>
<comment type="PTM">
    <text evidence="1">Initially, virus-like particles (VLPs) are composed of the structural unprocessed proteins Gag and Gag-Pol, and also contain the host initiator methionine tRNA (tRNA(i)-Met) which serves as a primer for minus-strand DNA synthesis, and a dimer of genomic Ty RNA. Processing of the polyproteins occurs within the particle and proceeds by an ordered pathway, called maturation. First, the protease (PR) is released by autocatalytic cleavage of the Gag-Pol polyprotein, and this cleavage is a prerequisite for subsequent processing at the remaining sites to release the mature structural and catalytic proteins. Maturation takes place prior to the RT reaction and is required to produce transposition-competent VLPs (By similarity).</text>
</comment>
<comment type="miscellaneous">
    <text>Retrotransposons are mobile genetic entities that are able to replicate via an RNA intermediate and a reverse transcription step. In contrast to retroviruses, retrotransposons are non-infectious, lack an envelope and remain intracellular. Ty3 retrotransposons belong to the gypsy-like elements (metaviridae).</text>
</comment>
<comment type="miscellaneous">
    <text>In contrast to Ty3-1 (Ty3-G), Ty3-2 (Ty3-I) is a transpositionally inactive element. The Ty3-2 ORF is truncated by the deletion of a single nucleotide, which causes a frameshift mutation when compared with Ty3-1.</text>
</comment>
<comment type="miscellaneous">
    <molecule>Isoform Transposon Ty3-I Gag-Pol polyprotein</molecule>
    <text>Produced by +1 ribosomal frameshifting between codon Ala-285 and Val-286 of the YIL082W ORF.</text>
</comment>
<comment type="sequence caution" evidence="7">
    <conflict type="erroneous gene model prediction">
        <sequence resource="EMBL-CDS" id="AAA35184"/>
    </conflict>
</comment>
<comment type="sequence caution" evidence="7">
    <conflict type="erroneous gene model prediction">
        <sequence resource="EMBL-CDS" id="CAA86713"/>
    </conflict>
</comment>
<comment type="sequence caution" evidence="7">
    <conflict type="erroneous gene model prediction">
        <sequence resource="EMBL-CDS" id="DAA08470"/>
    </conflict>
</comment>
<gene>
    <name type="primary">TY3B-I</name>
    <name type="synonym">YILWTy3-1 POL</name>
    <name type="ordered locus">YIL082W-A</name>
</gene>
<reference key="1">
    <citation type="journal article" date="1988" name="Mol. Cell. Biol.">
        <title>Ty3, a yeast retrotransposon associated with tRNA genes, has homology to animal retroviruses.</title>
        <authorList>
            <person name="Hansen L.J."/>
            <person name="Chalker D.L."/>
            <person name="Sandmeyer S.B."/>
        </authorList>
    </citation>
    <scope>NUCLEOTIDE SEQUENCE [GENOMIC DNA]</scope>
</reference>
<reference key="2">
    <citation type="journal article" date="1997" name="Nature">
        <title>The nucleotide sequence of Saccharomyces cerevisiae chromosome IX.</title>
        <authorList>
            <person name="Churcher C.M."/>
            <person name="Bowman S."/>
            <person name="Badcock K."/>
            <person name="Bankier A.T."/>
            <person name="Brown D."/>
            <person name="Chillingworth T."/>
            <person name="Connor R."/>
            <person name="Devlin K."/>
            <person name="Gentles S."/>
            <person name="Hamlin N."/>
            <person name="Harris D.E."/>
            <person name="Horsnell T."/>
            <person name="Hunt S."/>
            <person name="Jagels K."/>
            <person name="Jones M."/>
            <person name="Lye G."/>
            <person name="Moule S."/>
            <person name="Odell C."/>
            <person name="Pearson D."/>
            <person name="Rajandream M.A."/>
            <person name="Rice P."/>
            <person name="Rowley N."/>
            <person name="Skelton J."/>
            <person name="Smith V."/>
            <person name="Walsh S.V."/>
            <person name="Whitehead S."/>
            <person name="Barrell B.G."/>
        </authorList>
    </citation>
    <scope>NUCLEOTIDE SEQUENCE [LARGE SCALE GENOMIC DNA]</scope>
    <source>
        <strain>ATCC 204508 / S288c</strain>
    </source>
</reference>
<reference key="3">
    <citation type="journal article" date="2014" name="G3 (Bethesda)">
        <title>The reference genome sequence of Saccharomyces cerevisiae: Then and now.</title>
        <authorList>
            <person name="Engel S.R."/>
            <person name="Dietrich F.S."/>
            <person name="Fisk D.G."/>
            <person name="Binkley G."/>
            <person name="Balakrishnan R."/>
            <person name="Costanzo M.C."/>
            <person name="Dwight S.S."/>
            <person name="Hitz B.C."/>
            <person name="Karra K."/>
            <person name="Nash R.S."/>
            <person name="Weng S."/>
            <person name="Wong E.D."/>
            <person name="Lloyd P."/>
            <person name="Skrzypek M.S."/>
            <person name="Miyasato S.R."/>
            <person name="Simison M."/>
            <person name="Cherry J.M."/>
        </authorList>
    </citation>
    <scope>GENOME REANNOTATION</scope>
    <source>
        <strain>ATCC 204508 / S288c</strain>
    </source>
</reference>
<reference key="4">
    <citation type="journal article" date="1990" name="J. Virol.">
        <title>Characterization of a transpositionally active Ty3 element and identification of the Ty3 integrase protein.</title>
        <authorList>
            <person name="Hansen L.J."/>
            <person name="Sandmeyer S.B."/>
        </authorList>
    </citation>
    <scope>FUNCTION</scope>
</reference>
<reference key="5">
    <citation type="journal article" date="1998" name="Genome Res.">
        <title>Transposable elements and genome organization: a comprehensive survey of retrotransposons revealed by the complete Saccharomyces cerevisiae genome sequence.</title>
        <authorList>
            <person name="Kim J.M."/>
            <person name="Vanguri S."/>
            <person name="Boeke J.D."/>
            <person name="Gabriel A."/>
            <person name="Voytas D.F."/>
        </authorList>
    </citation>
    <scope>NOMENCLATURE</scope>
</reference>
<reference key="6">
    <citation type="journal article" date="2005" name="Cytogenet. Genome Res.">
        <title>Happy together: the life and times of Ty retrotransposons and their hosts.</title>
        <authorList>
            <person name="Lesage P."/>
            <person name="Todeschini A.L."/>
        </authorList>
    </citation>
    <scope>REVIEW</scope>
</reference>
<dbReference type="EC" id="3.4.23.-"/>
<dbReference type="EC" id="2.7.7.49"/>
<dbReference type="EC" id="2.7.7.7"/>
<dbReference type="EC" id="3.1.26.4"/>
<dbReference type="EMBL" id="M23367">
    <property type="protein sequence ID" value="AAA35184.1"/>
    <property type="status" value="ALT_SEQ"/>
    <property type="molecule type" value="Genomic_DNA"/>
</dbReference>
<dbReference type="EMBL" id="Z46728">
    <property type="protein sequence ID" value="CAA86713.1"/>
    <property type="status" value="ALT_SEQ"/>
    <property type="molecule type" value="Genomic_DNA"/>
</dbReference>
<dbReference type="EMBL" id="Z37997">
    <property type="protein sequence ID" value="CAA86090.1"/>
    <property type="molecule type" value="Genomic_DNA"/>
</dbReference>
<dbReference type="EMBL" id="BK006942">
    <property type="protein sequence ID" value="DAA08470.1"/>
    <property type="status" value="ALT_SEQ"/>
    <property type="molecule type" value="Genomic_DNA"/>
</dbReference>
<dbReference type="PIR" id="S53577">
    <property type="entry name" value="S53577"/>
</dbReference>
<dbReference type="RefSeq" id="NP_012184.1">
    <property type="nucleotide sequence ID" value="NM_001181434.4"/>
</dbReference>
<dbReference type="PDB" id="6R22">
    <property type="method" value="EM"/>
    <property type="resolution" value="5.50 A"/>
    <property type="chains" value="A/B=1-309"/>
</dbReference>
<dbReference type="PDB" id="6R23">
    <property type="method" value="EM"/>
    <property type="resolution" value="4.90 A"/>
    <property type="chains" value="A/B=1-309"/>
</dbReference>
<dbReference type="PDB" id="6R24">
    <property type="method" value="EM"/>
    <property type="resolution" value="7.50 A"/>
    <property type="chains" value="A/B/C/D/E/F/G/H/I=1-309"/>
</dbReference>
<dbReference type="PDBsum" id="6R22"/>
<dbReference type="PDBsum" id="6R23"/>
<dbReference type="PDBsum" id="6R24"/>
<dbReference type="EMDB" id="EMD-4707"/>
<dbReference type="EMDB" id="EMD-4708"/>
<dbReference type="EMDB" id="EMD-4709"/>
<dbReference type="SMR" id="Q7LHG5"/>
<dbReference type="BioGRID" id="34910">
    <property type="interactions" value="6"/>
</dbReference>
<dbReference type="FunCoup" id="Q7LHG5">
    <property type="interactions" value="28"/>
</dbReference>
<dbReference type="IntAct" id="Q7LHG5">
    <property type="interactions" value="3"/>
</dbReference>
<dbReference type="MINT" id="Q7LHG5"/>
<dbReference type="MEROPS" id="A02.022"/>
<dbReference type="GlyGen" id="Q7LHG5">
    <property type="glycosylation" value="4 sites, 1 O-linked glycan (3 sites)"/>
</dbReference>
<dbReference type="PaxDb" id="4932-YIL082W-A"/>
<dbReference type="PeptideAtlas" id="Q7LHG5"/>
<dbReference type="GeneID" id="854728"/>
<dbReference type="KEGG" id="sce:YIL082W-A"/>
<dbReference type="AGR" id="SGD:S000003537"/>
<dbReference type="SGD" id="S000003537">
    <property type="gene designation" value="YIL082W-A"/>
</dbReference>
<dbReference type="eggNOG" id="KOG0017">
    <property type="taxonomic scope" value="Eukaryota"/>
</dbReference>
<dbReference type="HOGENOM" id="CLU_000384_9_7_1"/>
<dbReference type="InParanoid" id="Q7LHG5"/>
<dbReference type="OrthoDB" id="4488294at2759"/>
<dbReference type="BioGRID-ORCS" id="854728">
    <property type="hits" value="1 hit in 10 CRISPR screens"/>
</dbReference>
<dbReference type="Proteomes" id="UP000002311">
    <property type="component" value="Chromosome IX"/>
</dbReference>
<dbReference type="RNAct" id="Q7LHG5">
    <property type="molecule type" value="protein"/>
</dbReference>
<dbReference type="GO" id="GO:0005737">
    <property type="term" value="C:cytoplasm"/>
    <property type="evidence" value="ECO:0007669"/>
    <property type="project" value="UniProtKB-SubCell"/>
</dbReference>
<dbReference type="GO" id="GO:0005634">
    <property type="term" value="C:nucleus"/>
    <property type="evidence" value="ECO:0000314"/>
    <property type="project" value="SGD"/>
</dbReference>
<dbReference type="GO" id="GO:0004190">
    <property type="term" value="F:aspartic-type endopeptidase activity"/>
    <property type="evidence" value="ECO:0007669"/>
    <property type="project" value="UniProtKB-KW"/>
</dbReference>
<dbReference type="GO" id="GO:0005524">
    <property type="term" value="F:ATP binding"/>
    <property type="evidence" value="ECO:0007669"/>
    <property type="project" value="UniProtKB-KW"/>
</dbReference>
<dbReference type="GO" id="GO:0003677">
    <property type="term" value="F:DNA binding"/>
    <property type="evidence" value="ECO:0007669"/>
    <property type="project" value="UniProtKB-KW"/>
</dbReference>
<dbReference type="GO" id="GO:0003887">
    <property type="term" value="F:DNA-directed DNA polymerase activity"/>
    <property type="evidence" value="ECO:0007669"/>
    <property type="project" value="UniProtKB-KW"/>
</dbReference>
<dbReference type="GO" id="GO:0003723">
    <property type="term" value="F:RNA binding"/>
    <property type="evidence" value="ECO:0007669"/>
    <property type="project" value="UniProtKB-KW"/>
</dbReference>
<dbReference type="GO" id="GO:0003964">
    <property type="term" value="F:RNA-directed DNA polymerase activity"/>
    <property type="evidence" value="ECO:0007669"/>
    <property type="project" value="UniProtKB-KW"/>
</dbReference>
<dbReference type="GO" id="GO:0004523">
    <property type="term" value="F:RNA-DNA hybrid ribonuclease activity"/>
    <property type="evidence" value="ECO:0007669"/>
    <property type="project" value="UniProtKB-EC"/>
</dbReference>
<dbReference type="GO" id="GO:0008270">
    <property type="term" value="F:zinc ion binding"/>
    <property type="evidence" value="ECO:0007669"/>
    <property type="project" value="UniProtKB-KW"/>
</dbReference>
<dbReference type="GO" id="GO:0015074">
    <property type="term" value="P:DNA integration"/>
    <property type="evidence" value="ECO:0007669"/>
    <property type="project" value="UniProtKB-KW"/>
</dbReference>
<dbReference type="GO" id="GO:0006310">
    <property type="term" value="P:DNA recombination"/>
    <property type="evidence" value="ECO:0007669"/>
    <property type="project" value="UniProtKB-KW"/>
</dbReference>
<dbReference type="GO" id="GO:0006508">
    <property type="term" value="P:proteolysis"/>
    <property type="evidence" value="ECO:0007669"/>
    <property type="project" value="UniProtKB-KW"/>
</dbReference>
<dbReference type="GO" id="GO:0075523">
    <property type="term" value="P:viral translational frameshifting"/>
    <property type="evidence" value="ECO:0007669"/>
    <property type="project" value="UniProtKB-KW"/>
</dbReference>
<dbReference type="CDD" id="cd00303">
    <property type="entry name" value="retropepsin_like"/>
    <property type="match status" value="1"/>
</dbReference>
<dbReference type="CDD" id="cd09274">
    <property type="entry name" value="RNase_HI_RT_Ty3"/>
    <property type="match status" value="1"/>
</dbReference>
<dbReference type="CDD" id="cd01647">
    <property type="entry name" value="RT_LTR"/>
    <property type="match status" value="1"/>
</dbReference>
<dbReference type="FunFam" id="3.10.10.10:FF:000007">
    <property type="entry name" value="Retrovirus-related Pol polyprotein from transposon 17.6-like Protein"/>
    <property type="match status" value="1"/>
</dbReference>
<dbReference type="FunFam" id="1.10.340.70:FF:000001">
    <property type="entry name" value="Retrovirus-related Pol polyprotein from transposon gypsy-like Protein"/>
    <property type="match status" value="1"/>
</dbReference>
<dbReference type="FunFam" id="3.30.70.270:FF:000026">
    <property type="entry name" value="Transposon Ty3-G Gag-Pol polyprotein"/>
    <property type="match status" value="1"/>
</dbReference>
<dbReference type="Gene3D" id="1.10.340.70">
    <property type="match status" value="1"/>
</dbReference>
<dbReference type="Gene3D" id="3.30.70.270">
    <property type="match status" value="2"/>
</dbReference>
<dbReference type="Gene3D" id="2.40.70.10">
    <property type="entry name" value="Acid Proteases"/>
    <property type="match status" value="1"/>
</dbReference>
<dbReference type="Gene3D" id="3.10.10.10">
    <property type="entry name" value="HIV Type 1 Reverse Transcriptase, subunit A, domain 1"/>
    <property type="match status" value="1"/>
</dbReference>
<dbReference type="Gene3D" id="3.30.420.10">
    <property type="entry name" value="Ribonuclease H-like superfamily/Ribonuclease H"/>
    <property type="match status" value="1"/>
</dbReference>
<dbReference type="InterPro" id="IPR043502">
    <property type="entry name" value="DNA/RNA_pol_sf"/>
</dbReference>
<dbReference type="InterPro" id="IPR001584">
    <property type="entry name" value="Integrase_cat-core"/>
</dbReference>
<dbReference type="InterPro" id="IPR041588">
    <property type="entry name" value="Integrase_H2C2"/>
</dbReference>
<dbReference type="InterPro" id="IPR024650">
    <property type="entry name" value="Peptidase_A2B"/>
</dbReference>
<dbReference type="InterPro" id="IPR021109">
    <property type="entry name" value="Peptidase_aspartic_dom_sf"/>
</dbReference>
<dbReference type="InterPro" id="IPR050951">
    <property type="entry name" value="Retrovirus_Pol_polyprotein"/>
</dbReference>
<dbReference type="InterPro" id="IPR043128">
    <property type="entry name" value="Rev_trsase/Diguanyl_cyclase"/>
</dbReference>
<dbReference type="InterPro" id="IPR012337">
    <property type="entry name" value="RNaseH-like_sf"/>
</dbReference>
<dbReference type="InterPro" id="IPR036397">
    <property type="entry name" value="RNaseH_sf"/>
</dbReference>
<dbReference type="InterPro" id="IPR000477">
    <property type="entry name" value="RT_dom"/>
</dbReference>
<dbReference type="InterPro" id="IPR041577">
    <property type="entry name" value="RT_RNaseH_2"/>
</dbReference>
<dbReference type="InterPro" id="IPR056924">
    <property type="entry name" value="SH3_Tf2-1"/>
</dbReference>
<dbReference type="InterPro" id="IPR045358">
    <property type="entry name" value="Ty3_capsid"/>
</dbReference>
<dbReference type="InterPro" id="IPR001878">
    <property type="entry name" value="Znf_CCHC"/>
</dbReference>
<dbReference type="InterPro" id="IPR036875">
    <property type="entry name" value="Znf_CCHC_sf"/>
</dbReference>
<dbReference type="PANTHER" id="PTHR37984">
    <property type="entry name" value="PROTEIN CBG26694"/>
    <property type="match status" value="1"/>
</dbReference>
<dbReference type="PANTHER" id="PTHR37984:SF5">
    <property type="entry name" value="PROTEIN NYNRIN-LIKE"/>
    <property type="match status" value="1"/>
</dbReference>
<dbReference type="Pfam" id="PF17921">
    <property type="entry name" value="Integrase_H2C2"/>
    <property type="match status" value="1"/>
</dbReference>
<dbReference type="Pfam" id="PF12384">
    <property type="entry name" value="Peptidase_A2B"/>
    <property type="match status" value="1"/>
</dbReference>
<dbReference type="Pfam" id="PF17919">
    <property type="entry name" value="RT_RNaseH_2"/>
    <property type="match status" value="1"/>
</dbReference>
<dbReference type="Pfam" id="PF00665">
    <property type="entry name" value="rve"/>
    <property type="match status" value="1"/>
</dbReference>
<dbReference type="Pfam" id="PF00078">
    <property type="entry name" value="RVT_1"/>
    <property type="match status" value="1"/>
</dbReference>
<dbReference type="Pfam" id="PF24626">
    <property type="entry name" value="SH3_Tf2-1"/>
    <property type="match status" value="1"/>
</dbReference>
<dbReference type="Pfam" id="PF19259">
    <property type="entry name" value="Ty3_capsid"/>
    <property type="match status" value="1"/>
</dbReference>
<dbReference type="SMART" id="SM00343">
    <property type="entry name" value="ZnF_C2HC"/>
    <property type="match status" value="1"/>
</dbReference>
<dbReference type="SUPFAM" id="SSF50630">
    <property type="entry name" value="Acid proteases"/>
    <property type="match status" value="1"/>
</dbReference>
<dbReference type="SUPFAM" id="SSF56672">
    <property type="entry name" value="DNA/RNA polymerases"/>
    <property type="match status" value="1"/>
</dbReference>
<dbReference type="SUPFAM" id="SSF57756">
    <property type="entry name" value="Retrovirus zinc finger-like domains"/>
    <property type="match status" value="1"/>
</dbReference>
<dbReference type="SUPFAM" id="SSF53098">
    <property type="entry name" value="Ribonuclease H-like"/>
    <property type="match status" value="1"/>
</dbReference>
<dbReference type="PROSITE" id="PS50994">
    <property type="entry name" value="INTEGRASE"/>
    <property type="match status" value="1"/>
</dbReference>
<dbReference type="PROSITE" id="PS50878">
    <property type="entry name" value="RT_POL"/>
    <property type="match status" value="1"/>
</dbReference>
<dbReference type="PROSITE" id="PS50158">
    <property type="entry name" value="ZF_CCHC"/>
    <property type="match status" value="1"/>
</dbReference>
<evidence type="ECO:0000250" key="1"/>
<evidence type="ECO:0000255" key="2"/>
<evidence type="ECO:0000255" key="3">
    <source>
        <dbReference type="PROSITE-ProRule" id="PRU00047"/>
    </source>
</evidence>
<evidence type="ECO:0000255" key="4">
    <source>
        <dbReference type="PROSITE-ProRule" id="PRU00405"/>
    </source>
</evidence>
<evidence type="ECO:0000255" key="5">
    <source>
        <dbReference type="PROSITE-ProRule" id="PRU00457"/>
    </source>
</evidence>
<evidence type="ECO:0000256" key="6">
    <source>
        <dbReference type="SAM" id="MobiDB-lite"/>
    </source>
</evidence>
<evidence type="ECO:0000305" key="7"/>
<sequence>MSFMDQIPGGGNYPKLPVECLPNFPIQPSLTFRGRNDSHKLKNFISEIMLNMSMISWPNDASRIVYCRRHLLNPAAQWANDFVQEQGILEITFDTFIQGLYQHFYKPPDINKIFNAITQLSEAKLGIERLNQRFRKIWDRMPPDFMTEKAAIMTYTRLLTKETYNIVRMHKPETLKDAMEEAYQTTALTERFFPGFELDADGDTIIGATTHLQEEYDSDYDSEDNLTQNRYVHTVRTRRSYNKPMSNHRNRRNNNASREECIKNRLCFYCKKEGHRLNECRARKAVLTDLELESKDQQTLFIKTLPIVHYIAIPEMDNTAEKTIKIQNTKVKTLFDSGSPTSFIRRDIVELLKYEIYETPPLRFRGFVATKSAVTSEAVTIDLKINDLQITLAAYILDNMDYQLLIGNPILRRYPKILHTVLNTRESPDSLKPKTYRSETVNNVRTYSAGNRGNPRNIKLSFAPTILEATDPKSAGNRGNPRNTKLSLAPTILEATDPKSAGNRGDSRTKTLSLATTTPAAIDPLTTLDNPGSTQSTFAQFPIPEEASILEEDGKYSNVVSTIQSVEPNATDHSNKDTFCTLPVWLQQKYREIIRNDLPPRPADINNIPVKHDIEIKPGARLPRLQPYHVTEKNEQEINKIVQKLLDNKFIVPSKSPCSSPVVLVPKKDGTFRLCVDYRTLNKATISDPFPLPRIDNLLSRIGNAQIFTTLDLHSGYHQIPMEPKDRYKTAFVTPSGKYEYTVMPFGLVNAPSTFARYMADTFRDLRFVNVYLDDILIFSESPEEHWKHLDTVLERLKNENLIVKKKKCKFASEETEFLGYSIGIQKIAPLQHKCAAIRDFPTPKTVKQAQRFLGMINYYRRFIPNCSKIAQPIQLFICDKSQWTEKQDKAIEKLKAALCNSPVLVPFNNKANYRLTTDASKDGIGAVLEEVDNKNKLVGVVGYFSKSLESAQKNYPAGELELLGIIKALHHFRYMLHGKHFTLRTDHISLLSLQNKNEPARRVQRWLDDLATYDFTLEYLAGPKNVVADAISRAIYTITPETSRPIDTESWKSYYKSDPLCSAVLIHMKELTQHNVTPEDMSAFRSYQKKLELSETFRKNYSLEDEMIYYQDRLVVPIKQQNAVMRLYHDHTLFGGHFGVTVTLAKISPIYYWPKLQHSIIQYIRTCVQCQLIKSHRPRLHGLLQPLPIAEGRWLDISMDFVTGLPPTSNNLNMILVVVDRFSKRAHFIATRKTLDATQLIDLLFRYIFSYHGFPRTITSDRDVRMTADKYQELTKRLGIKSTMSSANHPQTDGQSERTIQTLNRLLRAYVSTNIQNWHVYLPQIEFVYNSTPTRTLGKSPFEIDLGYLPNTPAIKSDDEVNARSFTAVELAKHLKALTIQTKEQLEHAQIEMETNNNQRRKPLLLNIGDHVLVHRDAYFKKGAYMKVQQIYVGPFRVVKKINDNAYELDLNSHKKKHRVINVQFLKSLYTVQTRTQRINQSAPLRELREHTKLLHS</sequence>
<accession>Q7LHG5</accession>
<accession>D6VVK4</accession>
<accession>Q04717</accession>
<accession>Q04722</accession>
<accession>Q05350</accession>